<comment type="function">
    <text evidence="1">Catalyzes the NAD(+)-dependent oxidation of L-threonine to 2-amino-3-ketobutyrate.</text>
</comment>
<comment type="catalytic activity">
    <reaction evidence="1">
        <text>L-threonine + NAD(+) = (2S)-2-amino-3-oxobutanoate + NADH + H(+)</text>
        <dbReference type="Rhea" id="RHEA:13161"/>
        <dbReference type="ChEBI" id="CHEBI:15378"/>
        <dbReference type="ChEBI" id="CHEBI:57540"/>
        <dbReference type="ChEBI" id="CHEBI:57926"/>
        <dbReference type="ChEBI" id="CHEBI:57945"/>
        <dbReference type="ChEBI" id="CHEBI:78948"/>
        <dbReference type="EC" id="1.1.1.103"/>
    </reaction>
</comment>
<comment type="cofactor">
    <cofactor evidence="1">
        <name>Zn(2+)</name>
        <dbReference type="ChEBI" id="CHEBI:29105"/>
    </cofactor>
    <text evidence="1">Binds 2 Zn(2+) ions per subunit.</text>
</comment>
<comment type="pathway">
    <text evidence="1">Amino-acid degradation; L-threonine degradation via oxydo-reductase pathway; glycine from L-threonine: step 1/2.</text>
</comment>
<comment type="subunit">
    <text evidence="1">Homotetramer.</text>
</comment>
<comment type="subcellular location">
    <subcellularLocation>
        <location evidence="1">Cytoplasm</location>
    </subcellularLocation>
</comment>
<comment type="similarity">
    <text evidence="1">Belongs to the zinc-containing alcohol dehydrogenase family.</text>
</comment>
<name>TDH_YERPE</name>
<sequence>MKALSKLKAEEGIWMTDVPQPELGHNDIMIKIRKTAICGTDVHIYNWDEWSQKTIPVPMVVGHEYVGEVVAIGQEVKGFNIGDRVSGEGHITCGHCRNCRGGRTHLCRNTVGVGVNRPGSFAEYLVIPAFNAFKIPDNISDELAAIFDPFGNAVHTALSFDLVGEDVLVSGAGPIGIMAAAVCKHVGARHVVIADVNEYRLDLARKMGVTRAVNVSKENLNDVMTELGMTEGFDVGLEMSGAPPAFRSLLNSMNHGGRIAMLGIPPSDMSIDWNQVIFKGLFIKGIYGREMFETWYKMAALIQSGLDLTPIITHRFPIDEFQQGFDAMRSGKSGKVVLSWD</sequence>
<organism>
    <name type="scientific">Yersinia pestis</name>
    <dbReference type="NCBI Taxonomy" id="632"/>
    <lineage>
        <taxon>Bacteria</taxon>
        <taxon>Pseudomonadati</taxon>
        <taxon>Pseudomonadota</taxon>
        <taxon>Gammaproteobacteria</taxon>
        <taxon>Enterobacterales</taxon>
        <taxon>Yersiniaceae</taxon>
        <taxon>Yersinia</taxon>
    </lineage>
</organism>
<evidence type="ECO:0000255" key="1">
    <source>
        <dbReference type="HAMAP-Rule" id="MF_00627"/>
    </source>
</evidence>
<keyword id="KW-0963">Cytoplasm</keyword>
<keyword id="KW-0479">Metal-binding</keyword>
<keyword id="KW-0520">NAD</keyword>
<keyword id="KW-0560">Oxidoreductase</keyword>
<keyword id="KW-1185">Reference proteome</keyword>
<keyword id="KW-0862">Zinc</keyword>
<reference key="1">
    <citation type="journal article" date="2001" name="Nature">
        <title>Genome sequence of Yersinia pestis, the causative agent of plague.</title>
        <authorList>
            <person name="Parkhill J."/>
            <person name="Wren B.W."/>
            <person name="Thomson N.R."/>
            <person name="Titball R.W."/>
            <person name="Holden M.T.G."/>
            <person name="Prentice M.B."/>
            <person name="Sebaihia M."/>
            <person name="James K.D."/>
            <person name="Churcher C.M."/>
            <person name="Mungall K.L."/>
            <person name="Baker S."/>
            <person name="Basham D."/>
            <person name="Bentley S.D."/>
            <person name="Brooks K."/>
            <person name="Cerdeno-Tarraga A.-M."/>
            <person name="Chillingworth T."/>
            <person name="Cronin A."/>
            <person name="Davies R.M."/>
            <person name="Davis P."/>
            <person name="Dougan G."/>
            <person name="Feltwell T."/>
            <person name="Hamlin N."/>
            <person name="Holroyd S."/>
            <person name="Jagels K."/>
            <person name="Karlyshev A.V."/>
            <person name="Leather S."/>
            <person name="Moule S."/>
            <person name="Oyston P.C.F."/>
            <person name="Quail M.A."/>
            <person name="Rutherford K.M."/>
            <person name="Simmonds M."/>
            <person name="Skelton J."/>
            <person name="Stevens K."/>
            <person name="Whitehead S."/>
            <person name="Barrell B.G."/>
        </authorList>
    </citation>
    <scope>NUCLEOTIDE SEQUENCE [LARGE SCALE GENOMIC DNA]</scope>
    <source>
        <strain>CO-92 / Biovar Orientalis</strain>
    </source>
</reference>
<reference key="2">
    <citation type="journal article" date="2002" name="J. Bacteriol.">
        <title>Genome sequence of Yersinia pestis KIM.</title>
        <authorList>
            <person name="Deng W."/>
            <person name="Burland V."/>
            <person name="Plunkett G. III"/>
            <person name="Boutin A."/>
            <person name="Mayhew G.F."/>
            <person name="Liss P."/>
            <person name="Perna N.T."/>
            <person name="Rose D.J."/>
            <person name="Mau B."/>
            <person name="Zhou S."/>
            <person name="Schwartz D.C."/>
            <person name="Fetherston J.D."/>
            <person name="Lindler L.E."/>
            <person name="Brubaker R.R."/>
            <person name="Plano G.V."/>
            <person name="Straley S.C."/>
            <person name="McDonough K.A."/>
            <person name="Nilles M.L."/>
            <person name="Matson J.S."/>
            <person name="Blattner F.R."/>
            <person name="Perry R.D."/>
        </authorList>
    </citation>
    <scope>NUCLEOTIDE SEQUENCE [LARGE SCALE GENOMIC DNA]</scope>
    <source>
        <strain>KIM10+ / Biovar Mediaevalis</strain>
    </source>
</reference>
<reference key="3">
    <citation type="journal article" date="2004" name="DNA Res.">
        <title>Complete genome sequence of Yersinia pestis strain 91001, an isolate avirulent to humans.</title>
        <authorList>
            <person name="Song Y."/>
            <person name="Tong Z."/>
            <person name="Wang J."/>
            <person name="Wang L."/>
            <person name="Guo Z."/>
            <person name="Han Y."/>
            <person name="Zhang J."/>
            <person name="Pei D."/>
            <person name="Zhou D."/>
            <person name="Qin H."/>
            <person name="Pang X."/>
            <person name="Han Y."/>
            <person name="Zhai J."/>
            <person name="Li M."/>
            <person name="Cui B."/>
            <person name="Qi Z."/>
            <person name="Jin L."/>
            <person name="Dai R."/>
            <person name="Chen F."/>
            <person name="Li S."/>
            <person name="Ye C."/>
            <person name="Du Z."/>
            <person name="Lin W."/>
            <person name="Wang J."/>
            <person name="Yu J."/>
            <person name="Yang H."/>
            <person name="Wang J."/>
            <person name="Huang P."/>
            <person name="Yang R."/>
        </authorList>
    </citation>
    <scope>NUCLEOTIDE SEQUENCE [LARGE SCALE GENOMIC DNA]</scope>
    <source>
        <strain>91001 / Biovar Mediaevalis</strain>
    </source>
</reference>
<gene>
    <name evidence="1" type="primary">tdh</name>
    <name type="ordered locus">YPO0060</name>
    <name type="ordered locus">y0080</name>
    <name type="ordered locus">YP_0061</name>
</gene>
<accession>Q8ZJN2</accession>
<accession>Q0WKN2</accession>
<feature type="chain" id="PRO_0000160873" description="L-threonine 3-dehydrogenase">
    <location>
        <begin position="1"/>
        <end position="341"/>
    </location>
</feature>
<feature type="active site" description="Charge relay system" evidence="1">
    <location>
        <position position="40"/>
    </location>
</feature>
<feature type="active site" description="Charge relay system" evidence="1">
    <location>
        <position position="43"/>
    </location>
</feature>
<feature type="binding site" evidence="1">
    <location>
        <position position="38"/>
    </location>
    <ligand>
        <name>Zn(2+)</name>
        <dbReference type="ChEBI" id="CHEBI:29105"/>
        <label>1</label>
        <note>catalytic</note>
    </ligand>
</feature>
<feature type="binding site" evidence="1">
    <location>
        <position position="63"/>
    </location>
    <ligand>
        <name>Zn(2+)</name>
        <dbReference type="ChEBI" id="CHEBI:29105"/>
        <label>1</label>
        <note>catalytic</note>
    </ligand>
</feature>
<feature type="binding site" evidence="1">
    <location>
        <position position="64"/>
    </location>
    <ligand>
        <name>Zn(2+)</name>
        <dbReference type="ChEBI" id="CHEBI:29105"/>
        <label>1</label>
        <note>catalytic</note>
    </ligand>
</feature>
<feature type="binding site" evidence="1">
    <location>
        <position position="93"/>
    </location>
    <ligand>
        <name>Zn(2+)</name>
        <dbReference type="ChEBI" id="CHEBI:29105"/>
        <label>2</label>
    </ligand>
</feature>
<feature type="binding site" evidence="1">
    <location>
        <position position="96"/>
    </location>
    <ligand>
        <name>Zn(2+)</name>
        <dbReference type="ChEBI" id="CHEBI:29105"/>
        <label>2</label>
    </ligand>
</feature>
<feature type="binding site" evidence="1">
    <location>
        <position position="99"/>
    </location>
    <ligand>
        <name>Zn(2+)</name>
        <dbReference type="ChEBI" id="CHEBI:29105"/>
        <label>2</label>
    </ligand>
</feature>
<feature type="binding site" evidence="1">
    <location>
        <position position="107"/>
    </location>
    <ligand>
        <name>Zn(2+)</name>
        <dbReference type="ChEBI" id="CHEBI:29105"/>
        <label>2</label>
    </ligand>
</feature>
<feature type="binding site" evidence="1">
    <location>
        <position position="175"/>
    </location>
    <ligand>
        <name>NAD(+)</name>
        <dbReference type="ChEBI" id="CHEBI:57540"/>
    </ligand>
</feature>
<feature type="binding site" evidence="1">
    <location>
        <position position="195"/>
    </location>
    <ligand>
        <name>NAD(+)</name>
        <dbReference type="ChEBI" id="CHEBI:57540"/>
    </ligand>
</feature>
<feature type="binding site" evidence="1">
    <location>
        <position position="200"/>
    </location>
    <ligand>
        <name>NAD(+)</name>
        <dbReference type="ChEBI" id="CHEBI:57540"/>
    </ligand>
</feature>
<feature type="binding site" evidence="1">
    <location>
        <begin position="262"/>
        <end position="264"/>
    </location>
    <ligand>
        <name>NAD(+)</name>
        <dbReference type="ChEBI" id="CHEBI:57540"/>
    </ligand>
</feature>
<feature type="binding site" evidence="1">
    <location>
        <begin position="286"/>
        <end position="287"/>
    </location>
    <ligand>
        <name>NAD(+)</name>
        <dbReference type="ChEBI" id="CHEBI:57540"/>
    </ligand>
</feature>
<feature type="site" description="Important for catalytic activity for the proton relay mechanism but does not participate directly in the coordination of zinc atom" evidence="1">
    <location>
        <position position="148"/>
    </location>
</feature>
<proteinExistence type="inferred from homology"/>
<protein>
    <recommendedName>
        <fullName evidence="1">L-threonine 3-dehydrogenase</fullName>
        <shortName evidence="1">TDH</shortName>
        <ecNumber evidence="1">1.1.1.103</ecNumber>
    </recommendedName>
</protein>
<dbReference type="EC" id="1.1.1.103" evidence="1"/>
<dbReference type="EMBL" id="AL590842">
    <property type="protein sequence ID" value="CAL18750.1"/>
    <property type="molecule type" value="Genomic_DNA"/>
</dbReference>
<dbReference type="EMBL" id="AE009952">
    <property type="protein sequence ID" value="AAM83674.1"/>
    <property type="molecule type" value="Genomic_DNA"/>
</dbReference>
<dbReference type="EMBL" id="AE017042">
    <property type="protein sequence ID" value="AAS60342.1"/>
    <property type="molecule type" value="Genomic_DNA"/>
</dbReference>
<dbReference type="PIR" id="AE0008">
    <property type="entry name" value="AE0008"/>
</dbReference>
<dbReference type="RefSeq" id="WP_002208981.1">
    <property type="nucleotide sequence ID" value="NZ_WUCM01000015.1"/>
</dbReference>
<dbReference type="RefSeq" id="YP_002345156.1">
    <property type="nucleotide sequence ID" value="NC_003143.1"/>
</dbReference>
<dbReference type="SMR" id="Q8ZJN2"/>
<dbReference type="IntAct" id="Q8ZJN2">
    <property type="interactions" value="2"/>
</dbReference>
<dbReference type="STRING" id="214092.YPO0060"/>
<dbReference type="PaxDb" id="214092-YPO0060"/>
<dbReference type="DNASU" id="1145027"/>
<dbReference type="EnsemblBacteria" id="AAS60342">
    <property type="protein sequence ID" value="AAS60342"/>
    <property type="gene ID" value="YP_0061"/>
</dbReference>
<dbReference type="GeneID" id="57974530"/>
<dbReference type="KEGG" id="ype:YPO0060"/>
<dbReference type="KEGG" id="ypk:y0080"/>
<dbReference type="KEGG" id="ypm:YP_0061"/>
<dbReference type="PATRIC" id="fig|214092.21.peg.283"/>
<dbReference type="eggNOG" id="COG1063">
    <property type="taxonomic scope" value="Bacteria"/>
</dbReference>
<dbReference type="HOGENOM" id="CLU_026673_11_0_6"/>
<dbReference type="OMA" id="MQNSCAP"/>
<dbReference type="OrthoDB" id="9773078at2"/>
<dbReference type="UniPathway" id="UPA00046">
    <property type="reaction ID" value="UER00505"/>
</dbReference>
<dbReference type="Proteomes" id="UP000000815">
    <property type="component" value="Chromosome"/>
</dbReference>
<dbReference type="Proteomes" id="UP000001019">
    <property type="component" value="Chromosome"/>
</dbReference>
<dbReference type="Proteomes" id="UP000002490">
    <property type="component" value="Chromosome"/>
</dbReference>
<dbReference type="GO" id="GO:0005737">
    <property type="term" value="C:cytoplasm"/>
    <property type="evidence" value="ECO:0007669"/>
    <property type="project" value="UniProtKB-SubCell"/>
</dbReference>
<dbReference type="GO" id="GO:0008743">
    <property type="term" value="F:L-threonine 3-dehydrogenase activity"/>
    <property type="evidence" value="ECO:0007669"/>
    <property type="project" value="UniProtKB-UniRule"/>
</dbReference>
<dbReference type="GO" id="GO:0008270">
    <property type="term" value="F:zinc ion binding"/>
    <property type="evidence" value="ECO:0007669"/>
    <property type="project" value="UniProtKB-UniRule"/>
</dbReference>
<dbReference type="GO" id="GO:0019518">
    <property type="term" value="P:L-threonine catabolic process to glycine"/>
    <property type="evidence" value="ECO:0007669"/>
    <property type="project" value="UniProtKB-UniPathway"/>
</dbReference>
<dbReference type="FunFam" id="3.40.50.720:FF:000059">
    <property type="entry name" value="L-threonine 3-dehydrogenase"/>
    <property type="match status" value="1"/>
</dbReference>
<dbReference type="Gene3D" id="3.90.180.10">
    <property type="entry name" value="Medium-chain alcohol dehydrogenases, catalytic domain"/>
    <property type="match status" value="1"/>
</dbReference>
<dbReference type="Gene3D" id="3.40.50.720">
    <property type="entry name" value="NAD(P)-binding Rossmann-like Domain"/>
    <property type="match status" value="1"/>
</dbReference>
<dbReference type="HAMAP" id="MF_00627">
    <property type="entry name" value="Thr_dehydrog"/>
    <property type="match status" value="1"/>
</dbReference>
<dbReference type="InterPro" id="IPR013149">
    <property type="entry name" value="ADH-like_C"/>
</dbReference>
<dbReference type="InterPro" id="IPR013154">
    <property type="entry name" value="ADH-like_N"/>
</dbReference>
<dbReference type="InterPro" id="IPR002328">
    <property type="entry name" value="ADH_Zn_CS"/>
</dbReference>
<dbReference type="InterPro" id="IPR011032">
    <property type="entry name" value="GroES-like_sf"/>
</dbReference>
<dbReference type="InterPro" id="IPR004627">
    <property type="entry name" value="L-Threonine_3-DHase"/>
</dbReference>
<dbReference type="InterPro" id="IPR036291">
    <property type="entry name" value="NAD(P)-bd_dom_sf"/>
</dbReference>
<dbReference type="InterPro" id="IPR020843">
    <property type="entry name" value="PKS_ER"/>
</dbReference>
<dbReference type="InterPro" id="IPR050129">
    <property type="entry name" value="Zn_alcohol_dh"/>
</dbReference>
<dbReference type="NCBIfam" id="NF003808">
    <property type="entry name" value="PRK05396.1"/>
    <property type="match status" value="1"/>
</dbReference>
<dbReference type="NCBIfam" id="TIGR00692">
    <property type="entry name" value="tdh"/>
    <property type="match status" value="1"/>
</dbReference>
<dbReference type="PANTHER" id="PTHR43401">
    <property type="entry name" value="L-THREONINE 3-DEHYDROGENASE"/>
    <property type="match status" value="1"/>
</dbReference>
<dbReference type="PANTHER" id="PTHR43401:SF2">
    <property type="entry name" value="L-THREONINE 3-DEHYDROGENASE"/>
    <property type="match status" value="1"/>
</dbReference>
<dbReference type="Pfam" id="PF08240">
    <property type="entry name" value="ADH_N"/>
    <property type="match status" value="1"/>
</dbReference>
<dbReference type="Pfam" id="PF00107">
    <property type="entry name" value="ADH_zinc_N"/>
    <property type="match status" value="1"/>
</dbReference>
<dbReference type="SMART" id="SM00829">
    <property type="entry name" value="PKS_ER"/>
    <property type="match status" value="1"/>
</dbReference>
<dbReference type="SUPFAM" id="SSF50129">
    <property type="entry name" value="GroES-like"/>
    <property type="match status" value="1"/>
</dbReference>
<dbReference type="SUPFAM" id="SSF51735">
    <property type="entry name" value="NAD(P)-binding Rossmann-fold domains"/>
    <property type="match status" value="1"/>
</dbReference>
<dbReference type="PROSITE" id="PS00059">
    <property type="entry name" value="ADH_ZINC"/>
    <property type="match status" value="1"/>
</dbReference>